<feature type="chain" id="PRO_1000006283" description="Serine hydroxymethyltransferase">
    <location>
        <begin position="1"/>
        <end position="416"/>
    </location>
</feature>
<feature type="binding site" evidence="1">
    <location>
        <position position="121"/>
    </location>
    <ligand>
        <name>(6S)-5,6,7,8-tetrahydrofolate</name>
        <dbReference type="ChEBI" id="CHEBI:57453"/>
    </ligand>
</feature>
<feature type="binding site" evidence="1">
    <location>
        <begin position="125"/>
        <end position="127"/>
    </location>
    <ligand>
        <name>(6S)-5,6,7,8-tetrahydrofolate</name>
        <dbReference type="ChEBI" id="CHEBI:57453"/>
    </ligand>
</feature>
<feature type="site" description="Plays an important role in substrate specificity" evidence="1">
    <location>
        <position position="229"/>
    </location>
</feature>
<feature type="modified residue" description="N6-(pyridoxal phosphate)lysine" evidence="1">
    <location>
        <position position="230"/>
    </location>
</feature>
<proteinExistence type="inferred from homology"/>
<dbReference type="EC" id="2.1.2.1" evidence="1"/>
<dbReference type="EMBL" id="CP000450">
    <property type="protein sequence ID" value="ABI59796.1"/>
    <property type="molecule type" value="Genomic_DNA"/>
</dbReference>
<dbReference type="RefSeq" id="WP_011634602.1">
    <property type="nucleotide sequence ID" value="NC_008344.1"/>
</dbReference>
<dbReference type="SMR" id="Q0AFT6"/>
<dbReference type="STRING" id="335283.Neut_1552"/>
<dbReference type="KEGG" id="net:Neut_1552"/>
<dbReference type="eggNOG" id="COG0112">
    <property type="taxonomic scope" value="Bacteria"/>
</dbReference>
<dbReference type="HOGENOM" id="CLU_022477_2_1_4"/>
<dbReference type="OrthoDB" id="9803846at2"/>
<dbReference type="UniPathway" id="UPA00193"/>
<dbReference type="UniPathway" id="UPA00288">
    <property type="reaction ID" value="UER01023"/>
</dbReference>
<dbReference type="Proteomes" id="UP000001966">
    <property type="component" value="Chromosome"/>
</dbReference>
<dbReference type="GO" id="GO:0005829">
    <property type="term" value="C:cytosol"/>
    <property type="evidence" value="ECO:0007669"/>
    <property type="project" value="TreeGrafter"/>
</dbReference>
<dbReference type="GO" id="GO:0004372">
    <property type="term" value="F:glycine hydroxymethyltransferase activity"/>
    <property type="evidence" value="ECO:0007669"/>
    <property type="project" value="UniProtKB-UniRule"/>
</dbReference>
<dbReference type="GO" id="GO:0030170">
    <property type="term" value="F:pyridoxal phosphate binding"/>
    <property type="evidence" value="ECO:0007669"/>
    <property type="project" value="UniProtKB-UniRule"/>
</dbReference>
<dbReference type="GO" id="GO:0019264">
    <property type="term" value="P:glycine biosynthetic process from serine"/>
    <property type="evidence" value="ECO:0007669"/>
    <property type="project" value="UniProtKB-UniRule"/>
</dbReference>
<dbReference type="GO" id="GO:0035999">
    <property type="term" value="P:tetrahydrofolate interconversion"/>
    <property type="evidence" value="ECO:0007669"/>
    <property type="project" value="UniProtKB-UniRule"/>
</dbReference>
<dbReference type="CDD" id="cd00378">
    <property type="entry name" value="SHMT"/>
    <property type="match status" value="1"/>
</dbReference>
<dbReference type="FunFam" id="3.40.640.10:FF:000001">
    <property type="entry name" value="Serine hydroxymethyltransferase"/>
    <property type="match status" value="1"/>
</dbReference>
<dbReference type="FunFam" id="3.90.1150.10:FF:000003">
    <property type="entry name" value="Serine hydroxymethyltransferase"/>
    <property type="match status" value="1"/>
</dbReference>
<dbReference type="Gene3D" id="3.90.1150.10">
    <property type="entry name" value="Aspartate Aminotransferase, domain 1"/>
    <property type="match status" value="1"/>
</dbReference>
<dbReference type="Gene3D" id="3.40.640.10">
    <property type="entry name" value="Type I PLP-dependent aspartate aminotransferase-like (Major domain)"/>
    <property type="match status" value="1"/>
</dbReference>
<dbReference type="HAMAP" id="MF_00051">
    <property type="entry name" value="SHMT"/>
    <property type="match status" value="1"/>
</dbReference>
<dbReference type="InterPro" id="IPR015424">
    <property type="entry name" value="PyrdxlP-dep_Trfase"/>
</dbReference>
<dbReference type="InterPro" id="IPR015421">
    <property type="entry name" value="PyrdxlP-dep_Trfase_major"/>
</dbReference>
<dbReference type="InterPro" id="IPR015422">
    <property type="entry name" value="PyrdxlP-dep_Trfase_small"/>
</dbReference>
<dbReference type="InterPro" id="IPR001085">
    <property type="entry name" value="Ser_HO-MeTrfase"/>
</dbReference>
<dbReference type="InterPro" id="IPR049943">
    <property type="entry name" value="Ser_HO-MeTrfase-like"/>
</dbReference>
<dbReference type="InterPro" id="IPR019798">
    <property type="entry name" value="Ser_HO-MeTrfase_PLP_BS"/>
</dbReference>
<dbReference type="InterPro" id="IPR039429">
    <property type="entry name" value="SHMT-like_dom"/>
</dbReference>
<dbReference type="NCBIfam" id="NF000586">
    <property type="entry name" value="PRK00011.1"/>
    <property type="match status" value="1"/>
</dbReference>
<dbReference type="PANTHER" id="PTHR11680">
    <property type="entry name" value="SERINE HYDROXYMETHYLTRANSFERASE"/>
    <property type="match status" value="1"/>
</dbReference>
<dbReference type="PANTHER" id="PTHR11680:SF50">
    <property type="entry name" value="SERINE HYDROXYMETHYLTRANSFERASE"/>
    <property type="match status" value="1"/>
</dbReference>
<dbReference type="Pfam" id="PF00464">
    <property type="entry name" value="SHMT"/>
    <property type="match status" value="1"/>
</dbReference>
<dbReference type="PIRSF" id="PIRSF000412">
    <property type="entry name" value="SHMT"/>
    <property type="match status" value="1"/>
</dbReference>
<dbReference type="SUPFAM" id="SSF53383">
    <property type="entry name" value="PLP-dependent transferases"/>
    <property type="match status" value="1"/>
</dbReference>
<dbReference type="PROSITE" id="PS00096">
    <property type="entry name" value="SHMT"/>
    <property type="match status" value="1"/>
</dbReference>
<keyword id="KW-0028">Amino-acid biosynthesis</keyword>
<keyword id="KW-0963">Cytoplasm</keyword>
<keyword id="KW-0554">One-carbon metabolism</keyword>
<keyword id="KW-0663">Pyridoxal phosphate</keyword>
<keyword id="KW-0808">Transferase</keyword>
<name>GLYA_NITEC</name>
<protein>
    <recommendedName>
        <fullName evidence="1">Serine hydroxymethyltransferase</fullName>
        <shortName evidence="1">SHMT</shortName>
        <shortName evidence="1">Serine methylase</shortName>
        <ecNumber evidence="1">2.1.2.1</ecNumber>
    </recommendedName>
</protein>
<accession>Q0AFT6</accession>
<sequence length="416" mass="45346">MFSKSMTIEQVDPDLWRAIQGEVQRQEDHIELIASENYASPAVLQAQGTVLTNKYAEGYPGKRYYGGCKHVDIVEQLAIDRLRALFNAEYVNVQPHSGSQANAAVYLSALKPGDTLLGMSLAHGGHLTHGAPVNMSGKIFNSIAYGLDPETEEIDYTELEQLAHEHKPRMIVAGASSYARVIDWQAFRKIADNVGAYLFVDMAHYAGLIAAGYYPNPVGIADFVTSSTHKTLRGPRGGVIMAKPEHEKALNSAVFPQTQGGPLMHVIAAKAVAFKEAASPAFKDYQKQVIENARVMARVLQQRGLRIVSGHTDCHMFLVDLRAKNLTGREAETALETAHITVNKNAIPNDPQKPFVTSGVRIGTPAITTRGFKELESEQLANLVADVLEAPTNEAVLDQVAREAQALCAKFPVYGN</sequence>
<evidence type="ECO:0000255" key="1">
    <source>
        <dbReference type="HAMAP-Rule" id="MF_00051"/>
    </source>
</evidence>
<reference key="1">
    <citation type="journal article" date="2007" name="Environ. Microbiol.">
        <title>Whole-genome analysis of the ammonia-oxidizing bacterium, Nitrosomonas eutropha C91: implications for niche adaptation.</title>
        <authorList>
            <person name="Stein L.Y."/>
            <person name="Arp D.J."/>
            <person name="Berube P.M."/>
            <person name="Chain P.S."/>
            <person name="Hauser L."/>
            <person name="Jetten M.S."/>
            <person name="Klotz M.G."/>
            <person name="Larimer F.W."/>
            <person name="Norton J.M."/>
            <person name="Op den Camp H.J.M."/>
            <person name="Shin M."/>
            <person name="Wei X."/>
        </authorList>
    </citation>
    <scope>NUCLEOTIDE SEQUENCE [LARGE SCALE GENOMIC DNA]</scope>
    <source>
        <strain>DSM 101675 / C91 / Nm57</strain>
    </source>
</reference>
<organism>
    <name type="scientific">Nitrosomonas eutropha (strain DSM 101675 / C91 / Nm57)</name>
    <dbReference type="NCBI Taxonomy" id="335283"/>
    <lineage>
        <taxon>Bacteria</taxon>
        <taxon>Pseudomonadati</taxon>
        <taxon>Pseudomonadota</taxon>
        <taxon>Betaproteobacteria</taxon>
        <taxon>Nitrosomonadales</taxon>
        <taxon>Nitrosomonadaceae</taxon>
        <taxon>Nitrosomonas</taxon>
    </lineage>
</organism>
<gene>
    <name evidence="1" type="primary">glyA</name>
    <name type="ordered locus">Neut_1552</name>
</gene>
<comment type="function">
    <text evidence="1">Catalyzes the reversible interconversion of serine and glycine with tetrahydrofolate (THF) serving as the one-carbon carrier. This reaction serves as the major source of one-carbon groups required for the biosynthesis of purines, thymidylate, methionine, and other important biomolecules. Also exhibits THF-independent aldolase activity toward beta-hydroxyamino acids, producing glycine and aldehydes, via a retro-aldol mechanism.</text>
</comment>
<comment type="catalytic activity">
    <reaction evidence="1">
        <text>(6R)-5,10-methylene-5,6,7,8-tetrahydrofolate + glycine + H2O = (6S)-5,6,7,8-tetrahydrofolate + L-serine</text>
        <dbReference type="Rhea" id="RHEA:15481"/>
        <dbReference type="ChEBI" id="CHEBI:15377"/>
        <dbReference type="ChEBI" id="CHEBI:15636"/>
        <dbReference type="ChEBI" id="CHEBI:33384"/>
        <dbReference type="ChEBI" id="CHEBI:57305"/>
        <dbReference type="ChEBI" id="CHEBI:57453"/>
        <dbReference type="EC" id="2.1.2.1"/>
    </reaction>
</comment>
<comment type="cofactor">
    <cofactor evidence="1">
        <name>pyridoxal 5'-phosphate</name>
        <dbReference type="ChEBI" id="CHEBI:597326"/>
    </cofactor>
</comment>
<comment type="pathway">
    <text evidence="1">One-carbon metabolism; tetrahydrofolate interconversion.</text>
</comment>
<comment type="pathway">
    <text evidence="1">Amino-acid biosynthesis; glycine biosynthesis; glycine from L-serine: step 1/1.</text>
</comment>
<comment type="subunit">
    <text evidence="1">Homodimer.</text>
</comment>
<comment type="subcellular location">
    <subcellularLocation>
        <location evidence="1">Cytoplasm</location>
    </subcellularLocation>
</comment>
<comment type="similarity">
    <text evidence="1">Belongs to the SHMT family.</text>
</comment>